<proteinExistence type="inferred from homology"/>
<comment type="function">
    <text evidence="1">GTPase that plays an essential role in the late steps of ribosome biogenesis.</text>
</comment>
<comment type="subunit">
    <text evidence="1">Associates with the 50S ribosomal subunit.</text>
</comment>
<comment type="similarity">
    <text evidence="1">Belongs to the TRAFAC class TrmE-Era-EngA-EngB-Septin-like GTPase superfamily. EngA (Der) GTPase family.</text>
</comment>
<name>DER_FUSNN</name>
<gene>
    <name evidence="1" type="primary">der</name>
    <name type="synonym">engA</name>
    <name type="ordered locus">FN0170</name>
</gene>
<reference key="1">
    <citation type="journal article" date="2002" name="J. Bacteriol.">
        <title>Genome sequence and analysis of the oral bacterium Fusobacterium nucleatum strain ATCC 25586.</title>
        <authorList>
            <person name="Kapatral V."/>
            <person name="Anderson I."/>
            <person name="Ivanova N."/>
            <person name="Reznik G."/>
            <person name="Los T."/>
            <person name="Lykidis A."/>
            <person name="Bhattacharyya A."/>
            <person name="Bartman A."/>
            <person name="Gardner W."/>
            <person name="Grechkin G."/>
            <person name="Zhu L."/>
            <person name="Vasieva O."/>
            <person name="Chu L."/>
            <person name="Kogan Y."/>
            <person name="Chaga O."/>
            <person name="Goltsman E."/>
            <person name="Bernal A."/>
            <person name="Larsen N."/>
            <person name="D'Souza M."/>
            <person name="Walunas T."/>
            <person name="Pusch G."/>
            <person name="Haselkorn R."/>
            <person name="Fonstein M."/>
            <person name="Kyrpides N.C."/>
            <person name="Overbeek R."/>
        </authorList>
    </citation>
    <scope>NUCLEOTIDE SEQUENCE [LARGE SCALE GENOMIC DNA]</scope>
    <source>
        <strain>ATCC 25586 / DSM 15643 / BCRC 10681 / CIP 101130 / JCM 8532 / KCTC 2640 / LMG 13131 / VPI 4355</strain>
    </source>
</reference>
<evidence type="ECO:0000255" key="1">
    <source>
        <dbReference type="HAMAP-Rule" id="MF_00195"/>
    </source>
</evidence>
<feature type="chain" id="PRO_0000178995" description="GTPase Der">
    <location>
        <begin position="1"/>
        <end position="440"/>
    </location>
</feature>
<feature type="domain" description="EngA-type G 1">
    <location>
        <begin position="3"/>
        <end position="168"/>
    </location>
</feature>
<feature type="domain" description="EngA-type G 2">
    <location>
        <begin position="177"/>
        <end position="353"/>
    </location>
</feature>
<feature type="domain" description="KH-like" evidence="1">
    <location>
        <begin position="354"/>
        <end position="438"/>
    </location>
</feature>
<feature type="binding site" evidence="1">
    <location>
        <begin position="9"/>
        <end position="16"/>
    </location>
    <ligand>
        <name>GTP</name>
        <dbReference type="ChEBI" id="CHEBI:37565"/>
        <label>1</label>
    </ligand>
</feature>
<feature type="binding site" evidence="1">
    <location>
        <begin position="56"/>
        <end position="60"/>
    </location>
    <ligand>
        <name>GTP</name>
        <dbReference type="ChEBI" id="CHEBI:37565"/>
        <label>1</label>
    </ligand>
</feature>
<feature type="binding site" evidence="1">
    <location>
        <begin position="119"/>
        <end position="122"/>
    </location>
    <ligand>
        <name>GTP</name>
        <dbReference type="ChEBI" id="CHEBI:37565"/>
        <label>1</label>
    </ligand>
</feature>
<feature type="binding site" evidence="1">
    <location>
        <begin position="183"/>
        <end position="190"/>
    </location>
    <ligand>
        <name>GTP</name>
        <dbReference type="ChEBI" id="CHEBI:37565"/>
        <label>2</label>
    </ligand>
</feature>
<feature type="binding site" evidence="1">
    <location>
        <begin position="230"/>
        <end position="234"/>
    </location>
    <ligand>
        <name>GTP</name>
        <dbReference type="ChEBI" id="CHEBI:37565"/>
        <label>2</label>
    </ligand>
</feature>
<feature type="binding site" evidence="1">
    <location>
        <begin position="295"/>
        <end position="298"/>
    </location>
    <ligand>
        <name>GTP</name>
        <dbReference type="ChEBI" id="CHEBI:37565"/>
        <label>2</label>
    </ligand>
</feature>
<dbReference type="EMBL" id="AE009951">
    <property type="protein sequence ID" value="AAL94376.1"/>
    <property type="molecule type" value="Genomic_DNA"/>
</dbReference>
<dbReference type="RefSeq" id="NP_603077.1">
    <property type="nucleotide sequence ID" value="NC_003454.1"/>
</dbReference>
<dbReference type="RefSeq" id="WP_011016201.1">
    <property type="nucleotide sequence ID" value="NZ_CP028101.1"/>
</dbReference>
<dbReference type="SMR" id="Q8RGV7"/>
<dbReference type="FunCoup" id="Q8RGV7">
    <property type="interactions" value="340"/>
</dbReference>
<dbReference type="STRING" id="190304.FN0170"/>
<dbReference type="PaxDb" id="190304-FN0170"/>
<dbReference type="EnsemblBacteria" id="AAL94376">
    <property type="protein sequence ID" value="AAL94376"/>
    <property type="gene ID" value="FN0170"/>
</dbReference>
<dbReference type="GeneID" id="79783188"/>
<dbReference type="KEGG" id="fnu:FN0170"/>
<dbReference type="PATRIC" id="fig|190304.8.peg.751"/>
<dbReference type="eggNOG" id="COG1160">
    <property type="taxonomic scope" value="Bacteria"/>
</dbReference>
<dbReference type="HOGENOM" id="CLU_016077_6_2_0"/>
<dbReference type="InParanoid" id="Q8RGV7"/>
<dbReference type="BioCyc" id="FNUC190304:G1FZS-773-MONOMER"/>
<dbReference type="Proteomes" id="UP000002521">
    <property type="component" value="Chromosome"/>
</dbReference>
<dbReference type="GO" id="GO:0005525">
    <property type="term" value="F:GTP binding"/>
    <property type="evidence" value="ECO:0007669"/>
    <property type="project" value="UniProtKB-UniRule"/>
</dbReference>
<dbReference type="GO" id="GO:0043022">
    <property type="term" value="F:ribosome binding"/>
    <property type="evidence" value="ECO:0000318"/>
    <property type="project" value="GO_Central"/>
</dbReference>
<dbReference type="GO" id="GO:0042254">
    <property type="term" value="P:ribosome biogenesis"/>
    <property type="evidence" value="ECO:0007669"/>
    <property type="project" value="UniProtKB-KW"/>
</dbReference>
<dbReference type="CDD" id="cd01894">
    <property type="entry name" value="EngA1"/>
    <property type="match status" value="1"/>
</dbReference>
<dbReference type="CDD" id="cd01895">
    <property type="entry name" value="EngA2"/>
    <property type="match status" value="1"/>
</dbReference>
<dbReference type="FunFam" id="3.30.300.20:FF:000004">
    <property type="entry name" value="GTPase Der"/>
    <property type="match status" value="1"/>
</dbReference>
<dbReference type="FunFam" id="3.40.50.300:FF:000040">
    <property type="entry name" value="GTPase Der"/>
    <property type="match status" value="1"/>
</dbReference>
<dbReference type="FunFam" id="3.40.50.300:FF:000057">
    <property type="entry name" value="GTPase Der"/>
    <property type="match status" value="1"/>
</dbReference>
<dbReference type="Gene3D" id="3.30.300.20">
    <property type="match status" value="1"/>
</dbReference>
<dbReference type="Gene3D" id="3.40.50.300">
    <property type="entry name" value="P-loop containing nucleotide triphosphate hydrolases"/>
    <property type="match status" value="2"/>
</dbReference>
<dbReference type="HAMAP" id="MF_00195">
    <property type="entry name" value="GTPase_Der"/>
    <property type="match status" value="1"/>
</dbReference>
<dbReference type="InterPro" id="IPR031166">
    <property type="entry name" value="G_ENGA"/>
</dbReference>
<dbReference type="InterPro" id="IPR006073">
    <property type="entry name" value="GTP-bd"/>
</dbReference>
<dbReference type="InterPro" id="IPR016484">
    <property type="entry name" value="GTPase_Der"/>
</dbReference>
<dbReference type="InterPro" id="IPR032859">
    <property type="entry name" value="KH_dom-like"/>
</dbReference>
<dbReference type="InterPro" id="IPR015946">
    <property type="entry name" value="KH_dom-like_a/b"/>
</dbReference>
<dbReference type="InterPro" id="IPR027417">
    <property type="entry name" value="P-loop_NTPase"/>
</dbReference>
<dbReference type="InterPro" id="IPR005225">
    <property type="entry name" value="Small_GTP-bd"/>
</dbReference>
<dbReference type="NCBIfam" id="TIGR03594">
    <property type="entry name" value="GTPase_EngA"/>
    <property type="match status" value="1"/>
</dbReference>
<dbReference type="NCBIfam" id="TIGR00231">
    <property type="entry name" value="small_GTP"/>
    <property type="match status" value="2"/>
</dbReference>
<dbReference type="PANTHER" id="PTHR43834">
    <property type="entry name" value="GTPASE DER"/>
    <property type="match status" value="1"/>
</dbReference>
<dbReference type="PANTHER" id="PTHR43834:SF6">
    <property type="entry name" value="GTPASE DER"/>
    <property type="match status" value="1"/>
</dbReference>
<dbReference type="Pfam" id="PF14714">
    <property type="entry name" value="KH_dom-like"/>
    <property type="match status" value="1"/>
</dbReference>
<dbReference type="Pfam" id="PF01926">
    <property type="entry name" value="MMR_HSR1"/>
    <property type="match status" value="2"/>
</dbReference>
<dbReference type="PIRSF" id="PIRSF006485">
    <property type="entry name" value="GTP-binding_EngA"/>
    <property type="match status" value="1"/>
</dbReference>
<dbReference type="PRINTS" id="PR00326">
    <property type="entry name" value="GTP1OBG"/>
</dbReference>
<dbReference type="SUPFAM" id="SSF52540">
    <property type="entry name" value="P-loop containing nucleoside triphosphate hydrolases"/>
    <property type="match status" value="2"/>
</dbReference>
<dbReference type="PROSITE" id="PS51712">
    <property type="entry name" value="G_ENGA"/>
    <property type="match status" value="2"/>
</dbReference>
<accession>Q8RGV7</accession>
<organism>
    <name type="scientific">Fusobacterium nucleatum subsp. nucleatum (strain ATCC 25586 / DSM 15643 / BCRC 10681 / CIP 101130 / JCM 8532 / KCTC 2640 / LMG 13131 / VPI 4355)</name>
    <dbReference type="NCBI Taxonomy" id="190304"/>
    <lineage>
        <taxon>Bacteria</taxon>
        <taxon>Fusobacteriati</taxon>
        <taxon>Fusobacteriota</taxon>
        <taxon>Fusobacteriia</taxon>
        <taxon>Fusobacteriales</taxon>
        <taxon>Fusobacteriaceae</taxon>
        <taxon>Fusobacterium</taxon>
    </lineage>
</organism>
<protein>
    <recommendedName>
        <fullName evidence="1">GTPase Der</fullName>
    </recommendedName>
    <alternativeName>
        <fullName evidence="1">GTP-binding protein EngA</fullName>
    </alternativeName>
</protein>
<sequence>MKPIIAIVGRPNVGKSTLFNNLVGDKIAIVDDLPGVTRDRLYRDTEWSGSEFVIVDTGGLEPRNNDFLMAKIKEQAEVAMNEADVILFVVDGKSGLNPLDEEIAYILRKKNKPVILCVNKIDNFFEQQDDVYDFYGLGFEYLVPISGEHKVNLGDMLDIVVDIIGKMDFPEEDEEVLKLAVIGKPNAGKSSLVNKLSGEERTIVSDIAGTTRDAIDTLIEYKDNKYMIIDTAGIRRKSKVEESLEYYSVLRALKAIKRADVCILMLDAKEGLTEQDKRIAGIAAEELKPIIIVMNKWDLVENKNNATMKKIKEELYAELPFLSYAPIEFVSALTGQRTTNLLEIADRIYEEYTKRISTGLLNTILKDAVLMNNPPTRKGRVIKINYATQVSVAPPKFVLFCNYPELIHFSYARYIENKFREAFGFDGSPIMISFENKSSD</sequence>
<keyword id="KW-0342">GTP-binding</keyword>
<keyword id="KW-0547">Nucleotide-binding</keyword>
<keyword id="KW-1185">Reference proteome</keyword>
<keyword id="KW-0677">Repeat</keyword>
<keyword id="KW-0690">Ribosome biogenesis</keyword>